<comment type="function">
    <text evidence="1">Required for accurate and efficient protein synthesis under certain stress conditions. May act as a fidelity factor of the translation reaction, by catalyzing a one-codon backward translocation of tRNAs on improperly translocated ribosomes. Back-translocation proceeds from a post-translocation (POST) complex to a pre-translocation (PRE) complex, thus giving elongation factor G a second chance to translocate the tRNAs correctly. Binds to ribosomes in a GTP-dependent manner.</text>
</comment>
<comment type="catalytic activity">
    <reaction evidence="1">
        <text>GTP + H2O = GDP + phosphate + H(+)</text>
        <dbReference type="Rhea" id="RHEA:19669"/>
        <dbReference type="ChEBI" id="CHEBI:15377"/>
        <dbReference type="ChEBI" id="CHEBI:15378"/>
        <dbReference type="ChEBI" id="CHEBI:37565"/>
        <dbReference type="ChEBI" id="CHEBI:43474"/>
        <dbReference type="ChEBI" id="CHEBI:58189"/>
        <dbReference type="EC" id="3.6.5.n1"/>
    </reaction>
</comment>
<comment type="subcellular location">
    <subcellularLocation>
        <location evidence="1">Cell inner membrane</location>
        <topology evidence="1">Peripheral membrane protein</topology>
        <orientation evidence="1">Cytoplasmic side</orientation>
    </subcellularLocation>
</comment>
<comment type="similarity">
    <text evidence="1">Belongs to the TRAFAC class translation factor GTPase superfamily. Classic translation factor GTPase family. LepA subfamily.</text>
</comment>
<gene>
    <name evidence="1" type="primary">lepA</name>
    <name type="ordered locus">SEN2563</name>
</gene>
<protein>
    <recommendedName>
        <fullName evidence="1">Elongation factor 4</fullName>
        <shortName evidence="1">EF-4</shortName>
        <ecNumber evidence="1">3.6.5.n1</ecNumber>
    </recommendedName>
    <alternativeName>
        <fullName evidence="1">Ribosomal back-translocase LepA</fullName>
    </alternativeName>
</protein>
<dbReference type="EC" id="3.6.5.n1" evidence="1"/>
<dbReference type="EMBL" id="AM933172">
    <property type="protein sequence ID" value="CAR34145.1"/>
    <property type="molecule type" value="Genomic_DNA"/>
</dbReference>
<dbReference type="RefSeq" id="WP_000790154.1">
    <property type="nucleotide sequence ID" value="NC_011294.1"/>
</dbReference>
<dbReference type="SMR" id="B5QTV0"/>
<dbReference type="KEGG" id="set:SEN2563"/>
<dbReference type="HOGENOM" id="CLU_009995_3_3_6"/>
<dbReference type="Proteomes" id="UP000000613">
    <property type="component" value="Chromosome"/>
</dbReference>
<dbReference type="GO" id="GO:0005886">
    <property type="term" value="C:plasma membrane"/>
    <property type="evidence" value="ECO:0007669"/>
    <property type="project" value="UniProtKB-SubCell"/>
</dbReference>
<dbReference type="GO" id="GO:0005525">
    <property type="term" value="F:GTP binding"/>
    <property type="evidence" value="ECO:0007669"/>
    <property type="project" value="UniProtKB-UniRule"/>
</dbReference>
<dbReference type="GO" id="GO:0003924">
    <property type="term" value="F:GTPase activity"/>
    <property type="evidence" value="ECO:0007669"/>
    <property type="project" value="UniProtKB-UniRule"/>
</dbReference>
<dbReference type="GO" id="GO:0097216">
    <property type="term" value="F:guanosine tetraphosphate binding"/>
    <property type="evidence" value="ECO:0007669"/>
    <property type="project" value="UniProtKB-ARBA"/>
</dbReference>
<dbReference type="GO" id="GO:0043022">
    <property type="term" value="F:ribosome binding"/>
    <property type="evidence" value="ECO:0007669"/>
    <property type="project" value="UniProtKB-UniRule"/>
</dbReference>
<dbReference type="GO" id="GO:0003746">
    <property type="term" value="F:translation elongation factor activity"/>
    <property type="evidence" value="ECO:0007669"/>
    <property type="project" value="UniProtKB-UniRule"/>
</dbReference>
<dbReference type="GO" id="GO:0045727">
    <property type="term" value="P:positive regulation of translation"/>
    <property type="evidence" value="ECO:0007669"/>
    <property type="project" value="UniProtKB-UniRule"/>
</dbReference>
<dbReference type="CDD" id="cd03699">
    <property type="entry name" value="EF4_II"/>
    <property type="match status" value="1"/>
</dbReference>
<dbReference type="CDD" id="cd16260">
    <property type="entry name" value="EF4_III"/>
    <property type="match status" value="1"/>
</dbReference>
<dbReference type="CDD" id="cd01890">
    <property type="entry name" value="LepA"/>
    <property type="match status" value="1"/>
</dbReference>
<dbReference type="CDD" id="cd03709">
    <property type="entry name" value="lepA_C"/>
    <property type="match status" value="1"/>
</dbReference>
<dbReference type="FunFam" id="3.30.70.240:FF:000005">
    <property type="entry name" value="Elongation factor 4"/>
    <property type="match status" value="1"/>
</dbReference>
<dbReference type="FunFam" id="3.40.50.300:FF:000078">
    <property type="entry name" value="Elongation factor 4"/>
    <property type="match status" value="1"/>
</dbReference>
<dbReference type="FunFam" id="2.40.30.10:FF:000015">
    <property type="entry name" value="Translation factor GUF1, mitochondrial"/>
    <property type="match status" value="1"/>
</dbReference>
<dbReference type="FunFam" id="3.30.70.2570:FF:000001">
    <property type="entry name" value="Translation factor GUF1, mitochondrial"/>
    <property type="match status" value="1"/>
</dbReference>
<dbReference type="FunFam" id="3.30.70.870:FF:000004">
    <property type="entry name" value="Translation factor GUF1, mitochondrial"/>
    <property type="match status" value="1"/>
</dbReference>
<dbReference type="Gene3D" id="3.30.70.240">
    <property type="match status" value="1"/>
</dbReference>
<dbReference type="Gene3D" id="3.30.70.2570">
    <property type="entry name" value="Elongation factor 4, C-terminal domain"/>
    <property type="match status" value="1"/>
</dbReference>
<dbReference type="Gene3D" id="3.30.70.870">
    <property type="entry name" value="Elongation Factor G (Translational Gtpase), domain 3"/>
    <property type="match status" value="1"/>
</dbReference>
<dbReference type="Gene3D" id="3.40.50.300">
    <property type="entry name" value="P-loop containing nucleotide triphosphate hydrolases"/>
    <property type="match status" value="1"/>
</dbReference>
<dbReference type="Gene3D" id="2.40.30.10">
    <property type="entry name" value="Translation factors"/>
    <property type="match status" value="1"/>
</dbReference>
<dbReference type="HAMAP" id="MF_00071">
    <property type="entry name" value="LepA"/>
    <property type="match status" value="1"/>
</dbReference>
<dbReference type="InterPro" id="IPR006297">
    <property type="entry name" value="EF-4"/>
</dbReference>
<dbReference type="InterPro" id="IPR035647">
    <property type="entry name" value="EFG_III/V"/>
</dbReference>
<dbReference type="InterPro" id="IPR000640">
    <property type="entry name" value="EFG_V-like"/>
</dbReference>
<dbReference type="InterPro" id="IPR004161">
    <property type="entry name" value="EFTu-like_2"/>
</dbReference>
<dbReference type="InterPro" id="IPR031157">
    <property type="entry name" value="G_TR_CS"/>
</dbReference>
<dbReference type="InterPro" id="IPR038363">
    <property type="entry name" value="LepA_C_sf"/>
</dbReference>
<dbReference type="InterPro" id="IPR013842">
    <property type="entry name" value="LepA_CTD"/>
</dbReference>
<dbReference type="InterPro" id="IPR035654">
    <property type="entry name" value="LepA_IV"/>
</dbReference>
<dbReference type="InterPro" id="IPR027417">
    <property type="entry name" value="P-loop_NTPase"/>
</dbReference>
<dbReference type="InterPro" id="IPR005225">
    <property type="entry name" value="Small_GTP-bd"/>
</dbReference>
<dbReference type="InterPro" id="IPR000795">
    <property type="entry name" value="T_Tr_GTP-bd_dom"/>
</dbReference>
<dbReference type="NCBIfam" id="TIGR01393">
    <property type="entry name" value="lepA"/>
    <property type="match status" value="1"/>
</dbReference>
<dbReference type="NCBIfam" id="TIGR00231">
    <property type="entry name" value="small_GTP"/>
    <property type="match status" value="1"/>
</dbReference>
<dbReference type="PANTHER" id="PTHR43512:SF4">
    <property type="entry name" value="TRANSLATION FACTOR GUF1 HOMOLOG, CHLOROPLASTIC"/>
    <property type="match status" value="1"/>
</dbReference>
<dbReference type="PANTHER" id="PTHR43512">
    <property type="entry name" value="TRANSLATION FACTOR GUF1-RELATED"/>
    <property type="match status" value="1"/>
</dbReference>
<dbReference type="Pfam" id="PF00679">
    <property type="entry name" value="EFG_C"/>
    <property type="match status" value="1"/>
</dbReference>
<dbReference type="Pfam" id="PF00009">
    <property type="entry name" value="GTP_EFTU"/>
    <property type="match status" value="1"/>
</dbReference>
<dbReference type="Pfam" id="PF03144">
    <property type="entry name" value="GTP_EFTU_D2"/>
    <property type="match status" value="1"/>
</dbReference>
<dbReference type="Pfam" id="PF06421">
    <property type="entry name" value="LepA_C"/>
    <property type="match status" value="1"/>
</dbReference>
<dbReference type="PRINTS" id="PR00315">
    <property type="entry name" value="ELONGATNFCT"/>
</dbReference>
<dbReference type="SUPFAM" id="SSF54980">
    <property type="entry name" value="EF-G C-terminal domain-like"/>
    <property type="match status" value="2"/>
</dbReference>
<dbReference type="SUPFAM" id="SSF52540">
    <property type="entry name" value="P-loop containing nucleoside triphosphate hydrolases"/>
    <property type="match status" value="1"/>
</dbReference>
<dbReference type="PROSITE" id="PS00301">
    <property type="entry name" value="G_TR_1"/>
    <property type="match status" value="1"/>
</dbReference>
<dbReference type="PROSITE" id="PS51722">
    <property type="entry name" value="G_TR_2"/>
    <property type="match status" value="1"/>
</dbReference>
<keyword id="KW-0997">Cell inner membrane</keyword>
<keyword id="KW-1003">Cell membrane</keyword>
<keyword id="KW-0342">GTP-binding</keyword>
<keyword id="KW-0378">Hydrolase</keyword>
<keyword id="KW-0472">Membrane</keyword>
<keyword id="KW-0547">Nucleotide-binding</keyword>
<keyword id="KW-0648">Protein biosynthesis</keyword>
<name>LEPA_SALEP</name>
<proteinExistence type="inferred from homology"/>
<sequence>MKNIRNFSIIAHIDHGKSTLSDRIIQICGGLSDREMEAQVLDSMDLERERGITIKAQSVTLDFKASDGETYQLNFIDTPGHVDFSYEVSRSLAACEGALLVVDAGQGVEAQTLANCYTAMEMDLEVVPVLNKIDLPAADPERVAEEIEDIVGIDATDAVRCSAKTGVGVTDVLERLVRDIPPPQGDPDGPLQALIIDSWFDNYLGVVSLVRIKNGTMRKGDKIKVMSTGQTYNADRLGIFTPKQVDRTELKCGEVGWLVCAIKDILGAPVGDTLTSARNPAEKALPGFKKVKPQVYAGLFPVSSDDYESFRDALGKLSLNDASLFYEPESSSALGFGFRCGFLGLLHMEIIQERLEREYDLDLITTAPTVVYEVETTAKETIYVDSPSKLPPLNNIYELREPIAECHMLLPQAYLGNVITLCIEKRGVQTNMVYHGNQVALTYEIPMAEVVLDFFDRLKSTSRGYASLDYNFKRFQASDMVRVDVLINNERVDALALITHRDNSQSRGRELVEKMKDLIPRQQFDIAIQAAIGTHIIARSTVKQLRKNVLAKCYGGDISRKKKLLQKQKEGKKRMKQIGNVELPQEAFLAILHVGKDNK</sequence>
<accession>B5QTV0</accession>
<reference key="1">
    <citation type="journal article" date="2008" name="Genome Res.">
        <title>Comparative genome analysis of Salmonella enteritidis PT4 and Salmonella gallinarum 287/91 provides insights into evolutionary and host adaptation pathways.</title>
        <authorList>
            <person name="Thomson N.R."/>
            <person name="Clayton D.J."/>
            <person name="Windhorst D."/>
            <person name="Vernikos G."/>
            <person name="Davidson S."/>
            <person name="Churcher C."/>
            <person name="Quail M.A."/>
            <person name="Stevens M."/>
            <person name="Jones M.A."/>
            <person name="Watson M."/>
            <person name="Barron A."/>
            <person name="Layton A."/>
            <person name="Pickard D."/>
            <person name="Kingsley R.A."/>
            <person name="Bignell A."/>
            <person name="Clark L."/>
            <person name="Harris B."/>
            <person name="Ormond D."/>
            <person name="Abdellah Z."/>
            <person name="Brooks K."/>
            <person name="Cherevach I."/>
            <person name="Chillingworth T."/>
            <person name="Woodward J."/>
            <person name="Norberczak H."/>
            <person name="Lord A."/>
            <person name="Arrowsmith C."/>
            <person name="Jagels K."/>
            <person name="Moule S."/>
            <person name="Mungall K."/>
            <person name="Saunders M."/>
            <person name="Whitehead S."/>
            <person name="Chabalgoity J.A."/>
            <person name="Maskell D."/>
            <person name="Humphreys T."/>
            <person name="Roberts M."/>
            <person name="Barrow P.A."/>
            <person name="Dougan G."/>
            <person name="Parkhill J."/>
        </authorList>
    </citation>
    <scope>NUCLEOTIDE SEQUENCE [LARGE SCALE GENOMIC DNA]</scope>
    <source>
        <strain>P125109</strain>
    </source>
</reference>
<organism>
    <name type="scientific">Salmonella enteritidis PT4 (strain P125109)</name>
    <dbReference type="NCBI Taxonomy" id="550537"/>
    <lineage>
        <taxon>Bacteria</taxon>
        <taxon>Pseudomonadati</taxon>
        <taxon>Pseudomonadota</taxon>
        <taxon>Gammaproteobacteria</taxon>
        <taxon>Enterobacterales</taxon>
        <taxon>Enterobacteriaceae</taxon>
        <taxon>Salmonella</taxon>
    </lineage>
</organism>
<evidence type="ECO:0000255" key="1">
    <source>
        <dbReference type="HAMAP-Rule" id="MF_00071"/>
    </source>
</evidence>
<feature type="chain" id="PRO_1000092440" description="Elongation factor 4">
    <location>
        <begin position="1"/>
        <end position="599"/>
    </location>
</feature>
<feature type="domain" description="tr-type G">
    <location>
        <begin position="2"/>
        <end position="184"/>
    </location>
</feature>
<feature type="binding site" evidence="1">
    <location>
        <begin position="14"/>
        <end position="19"/>
    </location>
    <ligand>
        <name>GTP</name>
        <dbReference type="ChEBI" id="CHEBI:37565"/>
    </ligand>
</feature>
<feature type="binding site" evidence="1">
    <location>
        <begin position="131"/>
        <end position="134"/>
    </location>
    <ligand>
        <name>GTP</name>
        <dbReference type="ChEBI" id="CHEBI:37565"/>
    </ligand>
</feature>